<comment type="subcellular location">
    <subcellularLocation>
        <location evidence="1">Cytoplasm</location>
    </subcellularLocation>
</comment>
<comment type="similarity">
    <text evidence="1">Belongs to the UPF0298 family.</text>
</comment>
<evidence type="ECO:0000255" key="1">
    <source>
        <dbReference type="HAMAP-Rule" id="MF_01126"/>
    </source>
</evidence>
<feature type="chain" id="PRO_1000164061" description="UPF0298 protein LMHCC_0506">
    <location>
        <begin position="1"/>
        <end position="93"/>
    </location>
</feature>
<protein>
    <recommendedName>
        <fullName evidence="1">UPF0298 protein LMHCC_0506</fullName>
    </recommendedName>
</protein>
<name>Y506_LISMH</name>
<keyword id="KW-0963">Cytoplasm</keyword>
<reference key="1">
    <citation type="journal article" date="2011" name="J. Bacteriol.">
        <title>Genome sequence of lineage III Listeria monocytogenes strain HCC23.</title>
        <authorList>
            <person name="Steele C.L."/>
            <person name="Donaldson J.R."/>
            <person name="Paul D."/>
            <person name="Banes M.M."/>
            <person name="Arick T."/>
            <person name="Bridges S.M."/>
            <person name="Lawrence M.L."/>
        </authorList>
    </citation>
    <scope>NUCLEOTIDE SEQUENCE [LARGE SCALE GENOMIC DNA]</scope>
    <source>
        <strain>HCC23</strain>
    </source>
</reference>
<gene>
    <name type="ordered locus">LMHCC_0506</name>
</gene>
<accession>B8DH75</accession>
<proteinExistence type="inferred from homology"/>
<sequence>MENDRQAIVVWMNHLKQVRSLKRFGNVHYVSRKLKYAVLYCDMAEVEDISNKVSRFHYVKRVEMSFRPFLKTEYESKKEMMYEHKNEDVQISI</sequence>
<dbReference type="EMBL" id="CP001175">
    <property type="protein sequence ID" value="ACK38863.1"/>
    <property type="molecule type" value="Genomic_DNA"/>
</dbReference>
<dbReference type="RefSeq" id="WP_003726138.1">
    <property type="nucleotide sequence ID" value="NC_011660.1"/>
</dbReference>
<dbReference type="SMR" id="B8DH75"/>
<dbReference type="KEGG" id="lmh:LMHCC_0506"/>
<dbReference type="HOGENOM" id="CLU_159890_2_0_9"/>
<dbReference type="GO" id="GO:0005737">
    <property type="term" value="C:cytoplasm"/>
    <property type="evidence" value="ECO:0007669"/>
    <property type="project" value="UniProtKB-SubCell"/>
</dbReference>
<dbReference type="HAMAP" id="MF_01126">
    <property type="entry name" value="UPF0298"/>
    <property type="match status" value="1"/>
</dbReference>
<dbReference type="InterPro" id="IPR016979">
    <property type="entry name" value="DUF2129"/>
</dbReference>
<dbReference type="NCBIfam" id="NF002777">
    <property type="entry name" value="PRK02886.1"/>
    <property type="match status" value="1"/>
</dbReference>
<dbReference type="Pfam" id="PF09902">
    <property type="entry name" value="DUF2129"/>
    <property type="match status" value="1"/>
</dbReference>
<dbReference type="PIRSF" id="PIRSF031653">
    <property type="entry name" value="UCP031653"/>
    <property type="match status" value="1"/>
</dbReference>
<organism>
    <name type="scientific">Listeria monocytogenes serotype 4a (strain HCC23)</name>
    <dbReference type="NCBI Taxonomy" id="552536"/>
    <lineage>
        <taxon>Bacteria</taxon>
        <taxon>Bacillati</taxon>
        <taxon>Bacillota</taxon>
        <taxon>Bacilli</taxon>
        <taxon>Bacillales</taxon>
        <taxon>Listeriaceae</taxon>
        <taxon>Listeria</taxon>
    </lineage>
</organism>